<proteinExistence type="evidence at protein level"/>
<comment type="function">
    <text evidence="1 5 6 7">Protein-arginine N-methyltransferase that catalyzes both the monomethylation and asymmetric dimethylation of the guanidino nitrogens of arginine residues in target proteins, and therefore falls into the group of type I methyltransferases (By similarity). Catalyzes the asymmetric arginine dimethylation at multiple sites in the Arg/Gly-rich region of small ribosomal subunit protein uS5/RPS2 (PubMed:15473865, PubMed:17439947). Also appears to methylate other ribosomal proteins (PubMed:15473865). May regulate retinoic acid synthesis and signaling by inhibiting ALDH1A1 retinal dehydrogenase activity (By similarity). Contributes to methylation of histone H4 'Arg-3', a specific tag for epigenetic transcriptional activation (By similarity). Promotes osteogenesis (PubMed:31378783).</text>
</comment>
<comment type="catalytic activity">
    <reaction evidence="2">
        <text>L-arginyl-[protein] + S-adenosyl-L-methionine = N(omega)-methyl-L-arginyl-[protein] + S-adenosyl-L-homocysteine + H(+)</text>
        <dbReference type="Rhea" id="RHEA:48100"/>
        <dbReference type="Rhea" id="RHEA-COMP:10532"/>
        <dbReference type="Rhea" id="RHEA-COMP:11990"/>
        <dbReference type="ChEBI" id="CHEBI:15378"/>
        <dbReference type="ChEBI" id="CHEBI:29965"/>
        <dbReference type="ChEBI" id="CHEBI:57856"/>
        <dbReference type="ChEBI" id="CHEBI:59789"/>
        <dbReference type="ChEBI" id="CHEBI:65280"/>
    </reaction>
    <physiologicalReaction direction="left-to-right" evidence="2">
        <dbReference type="Rhea" id="RHEA:48101"/>
    </physiologicalReaction>
</comment>
<comment type="catalytic activity">
    <reaction evidence="9">
        <text>L-arginyl-[protein] + 2 S-adenosyl-L-methionine = N(omega),N(omega)-dimethyl-L-arginyl-[protein] + 2 S-adenosyl-L-homocysteine + 2 H(+)</text>
        <dbReference type="Rhea" id="RHEA:48096"/>
        <dbReference type="Rhea" id="RHEA-COMP:10532"/>
        <dbReference type="Rhea" id="RHEA-COMP:11991"/>
        <dbReference type="ChEBI" id="CHEBI:15378"/>
        <dbReference type="ChEBI" id="CHEBI:29965"/>
        <dbReference type="ChEBI" id="CHEBI:57856"/>
        <dbReference type="ChEBI" id="CHEBI:59789"/>
        <dbReference type="ChEBI" id="CHEBI:61897"/>
        <dbReference type="EC" id="2.1.1.319"/>
    </reaction>
    <physiologicalReaction direction="left-to-right" evidence="9">
        <dbReference type="Rhea" id="RHEA:48097"/>
    </physiologicalReaction>
</comment>
<comment type="activity regulation">
    <text evidence="2">Inhibited by N-ethylmaleimide and high concentrations of zinc chloride.</text>
</comment>
<comment type="subunit">
    <text evidence="1 2">Monomer and homodimer (By similarity). Interacts with EPB41L3 (via FERM domain); the interaction is direct and inhibits the protein-arginine N-methyltransferase activity of PRMT3. Interacts with the 40S ribosomal protein RPS2. Interacts with ALDH1A1; the interaction is direct, inhibits ALDH1A1 aldehyde dehydrogenase activity and is independent of the methyltransferase activity of PRMT3 (By similarity).</text>
</comment>
<comment type="subcellular location">
    <subcellularLocation>
        <location evidence="9">Cytoplasm</location>
        <location evidence="9">Cytosol</location>
    </subcellularLocation>
    <subcellularLocation>
        <location evidence="1">Nucleus</location>
    </subcellularLocation>
</comment>
<comment type="domain">
    <text evidence="2">The C2H2-type zinc-finger is responsible for substrate specificity.</text>
</comment>
<comment type="disruption phenotype">
    <text evidence="7">shRNA-mediated knockdown leads to elevated osteoclast numbers and osteopenia.</text>
</comment>
<comment type="similarity">
    <text evidence="3">Belongs to the class I-like SAM-binding methyltransferase superfamily. Protein arginine N-methyltransferase family.</text>
</comment>
<gene>
    <name evidence="10" type="primary">Prmt3</name>
    <name type="synonym">Hrmt1l3</name>
</gene>
<keyword id="KW-0002">3D-structure</keyword>
<keyword id="KW-0007">Acetylation</keyword>
<keyword id="KW-0963">Cytoplasm</keyword>
<keyword id="KW-0479">Metal-binding</keyword>
<keyword id="KW-0489">Methyltransferase</keyword>
<keyword id="KW-0539">Nucleus</keyword>
<keyword id="KW-0597">Phosphoprotein</keyword>
<keyword id="KW-1185">Reference proteome</keyword>
<keyword id="KW-0949">S-adenosyl-L-methionine</keyword>
<keyword id="KW-0808">Transferase</keyword>
<keyword id="KW-0862">Zinc</keyword>
<keyword id="KW-0863">Zinc-finger</keyword>
<accession>Q922H1</accession>
<accession>Q3U2K1</accession>
<accession>Q80VU9</accession>
<accession>Q8BFV5</accession>
<sequence length="528" mass="59471">MCSLAAGNGRGAELGPEPLELSDSGDDAGWEDEDADTEPAHGRQHTPCLFCDRLFASAEETFSHCKLEHQFNIDSMVHKHGLEFYGYIKLINFIRLKNPTVEYMNSIYNPVPWEKDEYLKPVLEDDLLLQFDVEDLYEPVSTPFSYPNGLSESASVVEKLKHMEARALSAEAALARAREDLQKMKQFAQDFVMNVDVRTCSSTTTIADLQEDEDGVYFSSYGHYGIHEEMLKDKVRTESYRDFIYQNPHIFKDKVVLDVGCGTGILSMFAAKVGAKKVIAVDQSEILYQAMDIIRLNKLEDTIVLIKGKIEEVSLPVEKVDVIISEWMGYFLLFESMLDSVLYAKSKYLAKGGSVYPDICTISLVAVSDVSKHADRIAFWDDVYGFNMSCMKKAVIPEAVVEVVDHKTLISDPCDIKHIDCHTTSISDLEFSSDFTLRTTKTAMCTAVAGYFDIYFEKNCHNRVVFSTGPQSTKTHWKQTVFLLEKPFPVKAGEALKGKITVHKNKKDPRSLIVTLTLNSSTQTYSLQ</sequence>
<protein>
    <recommendedName>
        <fullName evidence="2">Protein arginine N-methyltransferase 3</fullName>
        <ecNumber evidence="9">2.1.1.319</ecNumber>
    </recommendedName>
    <alternativeName>
        <fullName>Heterogeneous nuclear ribonucleoprotein methyltransferase-like protein 3</fullName>
    </alternativeName>
</protein>
<evidence type="ECO:0000250" key="1">
    <source>
        <dbReference type="UniProtKB" id="O60678"/>
    </source>
</evidence>
<evidence type="ECO:0000250" key="2">
    <source>
        <dbReference type="UniProtKB" id="O70467"/>
    </source>
</evidence>
<evidence type="ECO:0000255" key="3">
    <source>
        <dbReference type="PROSITE-ProRule" id="PRU01015"/>
    </source>
</evidence>
<evidence type="ECO:0000256" key="4">
    <source>
        <dbReference type="SAM" id="MobiDB-lite"/>
    </source>
</evidence>
<evidence type="ECO:0000269" key="5">
    <source>
    </source>
</evidence>
<evidence type="ECO:0000269" key="6">
    <source>
    </source>
</evidence>
<evidence type="ECO:0000269" key="7">
    <source>
    </source>
</evidence>
<evidence type="ECO:0000305" key="8"/>
<evidence type="ECO:0000305" key="9">
    <source>
    </source>
</evidence>
<evidence type="ECO:0000312" key="10">
    <source>
        <dbReference type="MGI" id="MGI:1919224"/>
    </source>
</evidence>
<evidence type="ECO:0007744" key="11">
    <source>
    </source>
</evidence>
<evidence type="ECO:0007829" key="12">
    <source>
        <dbReference type="PDB" id="1WIR"/>
    </source>
</evidence>
<organism>
    <name type="scientific">Mus musculus</name>
    <name type="common">Mouse</name>
    <dbReference type="NCBI Taxonomy" id="10090"/>
    <lineage>
        <taxon>Eukaryota</taxon>
        <taxon>Metazoa</taxon>
        <taxon>Chordata</taxon>
        <taxon>Craniata</taxon>
        <taxon>Vertebrata</taxon>
        <taxon>Euteleostomi</taxon>
        <taxon>Mammalia</taxon>
        <taxon>Eutheria</taxon>
        <taxon>Euarchontoglires</taxon>
        <taxon>Glires</taxon>
        <taxon>Rodentia</taxon>
        <taxon>Myomorpha</taxon>
        <taxon>Muroidea</taxon>
        <taxon>Muridae</taxon>
        <taxon>Murinae</taxon>
        <taxon>Mus</taxon>
        <taxon>Mus</taxon>
    </lineage>
</organism>
<dbReference type="EC" id="2.1.1.319" evidence="9"/>
<dbReference type="EMBL" id="AY151050">
    <property type="protein sequence ID" value="AAN84530.1"/>
    <property type="molecule type" value="Genomic_DNA"/>
</dbReference>
<dbReference type="EMBL" id="AK031738">
    <property type="protein sequence ID" value="BAC27531.1"/>
    <property type="molecule type" value="mRNA"/>
</dbReference>
<dbReference type="EMBL" id="AK086646">
    <property type="protein sequence ID" value="BAC39708.1"/>
    <property type="molecule type" value="mRNA"/>
</dbReference>
<dbReference type="EMBL" id="AK155236">
    <property type="protein sequence ID" value="BAE33139.1"/>
    <property type="molecule type" value="mRNA"/>
</dbReference>
<dbReference type="EMBL" id="JH584275">
    <property type="status" value="NOT_ANNOTATED_CDS"/>
    <property type="molecule type" value="Genomic_DNA"/>
</dbReference>
<dbReference type="EMBL" id="BC008128">
    <property type="protein sequence ID" value="AAH08128.1"/>
    <property type="molecule type" value="mRNA"/>
</dbReference>
<dbReference type="EMBL" id="BC050775">
    <property type="protein sequence ID" value="AAH50775.1"/>
    <property type="molecule type" value="mRNA"/>
</dbReference>
<dbReference type="CCDS" id="CCDS21307.1"/>
<dbReference type="RefSeq" id="NP_598501.1">
    <property type="nucleotide sequence ID" value="NM_133740.2"/>
</dbReference>
<dbReference type="PDB" id="1WIR">
    <property type="method" value="NMR"/>
    <property type="chains" value="A=38-145"/>
</dbReference>
<dbReference type="PDBsum" id="1WIR"/>
<dbReference type="BMRB" id="Q922H1"/>
<dbReference type="SMR" id="Q922H1"/>
<dbReference type="BioGRID" id="215067">
    <property type="interactions" value="2"/>
</dbReference>
<dbReference type="FunCoup" id="Q922H1">
    <property type="interactions" value="3516"/>
</dbReference>
<dbReference type="IntAct" id="Q922H1">
    <property type="interactions" value="2"/>
</dbReference>
<dbReference type="MINT" id="Q922H1"/>
<dbReference type="STRING" id="10090.ENSMUSP00000032715"/>
<dbReference type="iPTMnet" id="Q922H1"/>
<dbReference type="PhosphoSitePlus" id="Q922H1"/>
<dbReference type="jPOST" id="Q922H1"/>
<dbReference type="PaxDb" id="10090-ENSMUSP00000032715"/>
<dbReference type="Pumba" id="Q922H1"/>
<dbReference type="Antibodypedia" id="1605">
    <property type="antibodies" value="346 antibodies from 32 providers"/>
</dbReference>
<dbReference type="DNASU" id="71974"/>
<dbReference type="Ensembl" id="ENSMUST00000032715.13">
    <property type="protein sequence ID" value="ENSMUSP00000032715.7"/>
    <property type="gene ID" value="ENSMUSG00000030505.18"/>
</dbReference>
<dbReference type="GeneID" id="71974"/>
<dbReference type="KEGG" id="mmu:71974"/>
<dbReference type="AGR" id="MGI:1919224"/>
<dbReference type="CTD" id="10196"/>
<dbReference type="MGI" id="MGI:1919224">
    <property type="gene designation" value="Prmt3"/>
</dbReference>
<dbReference type="VEuPathDB" id="HostDB:ENSMUSG00000030505"/>
<dbReference type="eggNOG" id="KOG1499">
    <property type="taxonomic scope" value="Eukaryota"/>
</dbReference>
<dbReference type="GeneTree" id="ENSGT00940000156825"/>
<dbReference type="HOGENOM" id="CLU_017375_6_2_1"/>
<dbReference type="InParanoid" id="Q922H1"/>
<dbReference type="OMA" id="YSHFAIH"/>
<dbReference type="OrthoDB" id="7848332at2759"/>
<dbReference type="PhylomeDB" id="Q922H1"/>
<dbReference type="TreeFam" id="TF323587"/>
<dbReference type="Reactome" id="R-MMU-3214858">
    <property type="pathway name" value="RMTs methylate histone arginines"/>
</dbReference>
<dbReference type="Reactome" id="R-MMU-8876725">
    <property type="pathway name" value="Protein methylation"/>
</dbReference>
<dbReference type="BioGRID-ORCS" id="71974">
    <property type="hits" value="6 hits in 83 CRISPR screens"/>
</dbReference>
<dbReference type="ChiTaRS" id="Prmt8">
    <property type="organism name" value="mouse"/>
</dbReference>
<dbReference type="EvolutionaryTrace" id="Q922H1"/>
<dbReference type="PRO" id="PR:Q922H1"/>
<dbReference type="Proteomes" id="UP000000589">
    <property type="component" value="Chromosome 7"/>
</dbReference>
<dbReference type="RNAct" id="Q922H1">
    <property type="molecule type" value="protein"/>
</dbReference>
<dbReference type="Bgee" id="ENSMUSG00000030505">
    <property type="expression patterns" value="Expressed in undifferentiated genital tubercle and 259 other cell types or tissues"/>
</dbReference>
<dbReference type="ExpressionAtlas" id="Q922H1">
    <property type="expression patterns" value="baseline and differential"/>
</dbReference>
<dbReference type="GO" id="GO:0005829">
    <property type="term" value="C:cytosol"/>
    <property type="evidence" value="ECO:0000314"/>
    <property type="project" value="UniProtKB"/>
</dbReference>
<dbReference type="GO" id="GO:0005634">
    <property type="term" value="C:nucleus"/>
    <property type="evidence" value="ECO:0007669"/>
    <property type="project" value="UniProtKB-SubCell"/>
</dbReference>
<dbReference type="GO" id="GO:0044020">
    <property type="term" value="F:histone H4R3 methyltransferase activity"/>
    <property type="evidence" value="ECO:0007669"/>
    <property type="project" value="Ensembl"/>
</dbReference>
<dbReference type="GO" id="GO:0016274">
    <property type="term" value="F:protein-arginine N-methyltransferase activity"/>
    <property type="evidence" value="ECO:0000314"/>
    <property type="project" value="MGI"/>
</dbReference>
<dbReference type="GO" id="GO:0035242">
    <property type="term" value="F:protein-arginine omega-N asymmetric methyltransferase activity"/>
    <property type="evidence" value="ECO:0000314"/>
    <property type="project" value="UniProtKB"/>
</dbReference>
<dbReference type="GO" id="GO:0035241">
    <property type="term" value="F:protein-arginine omega-N monomethyltransferase activity"/>
    <property type="evidence" value="ECO:0007669"/>
    <property type="project" value="RHEA"/>
</dbReference>
<dbReference type="GO" id="GO:0008270">
    <property type="term" value="F:zinc ion binding"/>
    <property type="evidence" value="ECO:0007669"/>
    <property type="project" value="UniProtKB-KW"/>
</dbReference>
<dbReference type="GO" id="GO:0032259">
    <property type="term" value="P:methylation"/>
    <property type="evidence" value="ECO:0007669"/>
    <property type="project" value="UniProtKB-KW"/>
</dbReference>
<dbReference type="GO" id="GO:0031397">
    <property type="term" value="P:negative regulation of protein ubiquitination"/>
    <property type="evidence" value="ECO:0007669"/>
    <property type="project" value="Ensembl"/>
</dbReference>
<dbReference type="GO" id="GO:1900053">
    <property type="term" value="P:negative regulation of retinoic acid biosynthetic process"/>
    <property type="evidence" value="ECO:0000250"/>
    <property type="project" value="UniProtKB"/>
</dbReference>
<dbReference type="GO" id="GO:0045669">
    <property type="term" value="P:positive regulation of osteoblast differentiation"/>
    <property type="evidence" value="ECO:0000315"/>
    <property type="project" value="UniProtKB"/>
</dbReference>
<dbReference type="GO" id="GO:0045815">
    <property type="term" value="P:transcription initiation-coupled chromatin remodeling"/>
    <property type="evidence" value="ECO:0007669"/>
    <property type="project" value="Ensembl"/>
</dbReference>
<dbReference type="CDD" id="cd02440">
    <property type="entry name" value="AdoMet_MTases"/>
    <property type="match status" value="1"/>
</dbReference>
<dbReference type="FunFam" id="3.40.50.150:FF:000034">
    <property type="entry name" value="Protein arginine N-methyltransferase 3"/>
    <property type="match status" value="1"/>
</dbReference>
<dbReference type="FunFam" id="2.70.160.11:FF:000005">
    <property type="entry name" value="protein arginine N-methyltransferase 3 isoform X2"/>
    <property type="match status" value="1"/>
</dbReference>
<dbReference type="Gene3D" id="2.70.160.11">
    <property type="entry name" value="Hnrnp arginine n-methyltransferase1"/>
    <property type="match status" value="1"/>
</dbReference>
<dbReference type="Gene3D" id="3.40.50.150">
    <property type="entry name" value="Vaccinia Virus protein VP39"/>
    <property type="match status" value="1"/>
</dbReference>
<dbReference type="InterPro" id="IPR049482">
    <property type="entry name" value="ANM3-like_C2H2_Zf"/>
</dbReference>
<dbReference type="InterPro" id="IPR049009">
    <property type="entry name" value="ANM3_Znf-C2H2"/>
</dbReference>
<dbReference type="InterPro" id="IPR025799">
    <property type="entry name" value="Arg_MeTrfase"/>
</dbReference>
<dbReference type="InterPro" id="IPR055135">
    <property type="entry name" value="PRMT_dom"/>
</dbReference>
<dbReference type="InterPro" id="IPR029063">
    <property type="entry name" value="SAM-dependent_MTases_sf"/>
</dbReference>
<dbReference type="InterPro" id="IPR036236">
    <property type="entry name" value="Znf_C2H2_sf"/>
</dbReference>
<dbReference type="PANTHER" id="PTHR11006">
    <property type="entry name" value="PROTEIN ARGININE N-METHYLTRANSFERASE"/>
    <property type="match status" value="1"/>
</dbReference>
<dbReference type="PANTHER" id="PTHR11006:SF53">
    <property type="entry name" value="PROTEIN ARGININE N-METHYLTRANSFERASE 3"/>
    <property type="match status" value="1"/>
</dbReference>
<dbReference type="Pfam" id="PF21137">
    <property type="entry name" value="ANM3_C2H2_Zf"/>
    <property type="match status" value="1"/>
</dbReference>
<dbReference type="Pfam" id="PF21336">
    <property type="entry name" value="ANM3_zf-C2H2"/>
    <property type="match status" value="1"/>
</dbReference>
<dbReference type="Pfam" id="PF06325">
    <property type="entry name" value="PrmA"/>
    <property type="match status" value="1"/>
</dbReference>
<dbReference type="Pfam" id="PF22528">
    <property type="entry name" value="PRMT_C"/>
    <property type="match status" value="1"/>
</dbReference>
<dbReference type="SUPFAM" id="SSF57667">
    <property type="entry name" value="beta-beta-alpha zinc fingers"/>
    <property type="match status" value="1"/>
</dbReference>
<dbReference type="SUPFAM" id="SSF53335">
    <property type="entry name" value="S-adenosyl-L-methionine-dependent methyltransferases"/>
    <property type="match status" value="1"/>
</dbReference>
<dbReference type="PROSITE" id="PS51678">
    <property type="entry name" value="SAM_MT_PRMT"/>
    <property type="match status" value="1"/>
</dbReference>
<dbReference type="PROSITE" id="PS00028">
    <property type="entry name" value="ZINC_FINGER_C2H2_1"/>
    <property type="match status" value="1"/>
</dbReference>
<name>ANM3_MOUSE</name>
<feature type="initiator methionine" description="Removed" evidence="1">
    <location>
        <position position="1"/>
    </location>
</feature>
<feature type="chain" id="PRO_0000212327" description="Protein arginine N-methyltransferase 3">
    <location>
        <begin position="2"/>
        <end position="528"/>
    </location>
</feature>
<feature type="domain" description="SAM-dependent MTase PRMT-type" evidence="3">
    <location>
        <begin position="214"/>
        <end position="528"/>
    </location>
</feature>
<feature type="zinc finger region" description="C2H2-type">
    <location>
        <begin position="46"/>
        <end position="69"/>
    </location>
</feature>
<feature type="region of interest" description="Disordered" evidence="4">
    <location>
        <begin position="1"/>
        <end position="43"/>
    </location>
</feature>
<feature type="region of interest" description="Mediates interaction with ALDH1A1" evidence="1">
    <location>
        <begin position="184"/>
        <end position="528"/>
    </location>
</feature>
<feature type="compositionally biased region" description="Acidic residues" evidence="4">
    <location>
        <begin position="23"/>
        <end position="37"/>
    </location>
</feature>
<feature type="active site" evidence="2">
    <location>
        <position position="326"/>
    </location>
</feature>
<feature type="active site" evidence="2">
    <location>
        <position position="335"/>
    </location>
</feature>
<feature type="binding site" evidence="2">
    <location>
        <position position="236"/>
    </location>
    <ligand>
        <name>S-adenosyl-L-homocysteine</name>
        <dbReference type="ChEBI" id="CHEBI:57856"/>
    </ligand>
</feature>
<feature type="binding site" evidence="2">
    <location>
        <position position="260"/>
    </location>
    <ligand>
        <name>S-adenosyl-L-homocysteine</name>
        <dbReference type="ChEBI" id="CHEBI:57856"/>
    </ligand>
</feature>
<feature type="binding site" evidence="2">
    <location>
        <position position="282"/>
    </location>
    <ligand>
        <name>S-adenosyl-L-homocysteine</name>
        <dbReference type="ChEBI" id="CHEBI:57856"/>
    </ligand>
</feature>
<feature type="binding site" evidence="2">
    <location>
        <position position="284"/>
    </location>
    <ligand>
        <name>S-adenosyl-L-homocysteine</name>
        <dbReference type="ChEBI" id="CHEBI:57856"/>
    </ligand>
</feature>
<feature type="binding site" evidence="2">
    <location>
        <position position="310"/>
    </location>
    <ligand>
        <name>S-adenosyl-L-homocysteine</name>
        <dbReference type="ChEBI" id="CHEBI:57856"/>
    </ligand>
</feature>
<feature type="binding site" evidence="2">
    <location>
        <position position="311"/>
    </location>
    <ligand>
        <name>S-adenosyl-L-homocysteine</name>
        <dbReference type="ChEBI" id="CHEBI:57856"/>
    </ligand>
</feature>
<feature type="modified residue" description="N-acetylcysteine" evidence="1">
    <location>
        <position position="2"/>
    </location>
</feature>
<feature type="modified residue" description="Phosphoserine" evidence="11">
    <location>
        <position position="22"/>
    </location>
</feature>
<feature type="modified residue" description="Phosphoserine" evidence="11">
    <location>
        <position position="24"/>
    </location>
</feature>
<feature type="modified residue" description="Phosphoserine" evidence="1">
    <location>
        <position position="169"/>
    </location>
</feature>
<feature type="sequence conflict" description="In Ref. 2; BAE33139." evidence="8" ref="2">
    <original>F</original>
    <variation>Y</variation>
    <location>
        <position position="131"/>
    </location>
</feature>
<feature type="sequence conflict" description="In Ref. 4; AAH50775." evidence="8" ref="4">
    <original>K</original>
    <variation>KMDGK</variation>
    <location>
        <position position="417"/>
    </location>
</feature>
<feature type="strand" evidence="12">
    <location>
        <begin position="49"/>
        <end position="51"/>
    </location>
</feature>
<feature type="strand" evidence="12">
    <location>
        <begin position="54"/>
        <end position="57"/>
    </location>
</feature>
<feature type="helix" evidence="12">
    <location>
        <begin position="58"/>
        <end position="67"/>
    </location>
</feature>
<feature type="helix" evidence="12">
    <location>
        <begin position="73"/>
        <end position="79"/>
    </location>
</feature>
<feature type="helix" evidence="12">
    <location>
        <begin position="84"/>
        <end position="96"/>
    </location>
</feature>
<feature type="helix" evidence="12">
    <location>
        <begin position="101"/>
        <end position="105"/>
    </location>
</feature>
<feature type="helix" evidence="12">
    <location>
        <begin position="116"/>
        <end position="119"/>
    </location>
</feature>
<feature type="strand" evidence="12">
    <location>
        <begin position="122"/>
        <end position="125"/>
    </location>
</feature>
<feature type="helix" evidence="12">
    <location>
        <begin position="127"/>
        <end position="130"/>
    </location>
</feature>
<feature type="helix" evidence="12">
    <location>
        <begin position="133"/>
        <end position="136"/>
    </location>
</feature>
<reference key="1">
    <citation type="submission" date="2002-09" db="EMBL/GenBank/DDBJ databases">
        <title>Genomic organization, chromosomal mapping, and expression analysis of the murine Prmt3 and Htatip2 genes.</title>
        <authorList>
            <person name="Hauser L.J."/>
            <person name="Webb L.S."/>
            <person name="Dhar M.S."/>
            <person name="Mural R.M."/>
            <person name="Larimer F.W."/>
            <person name="Johnson D.K."/>
        </authorList>
    </citation>
    <scope>NUCLEOTIDE SEQUENCE [GENOMIC DNA]</scope>
    <source>
        <strain>129/SvJ</strain>
    </source>
</reference>
<reference key="2">
    <citation type="journal article" date="2005" name="Science">
        <title>The transcriptional landscape of the mammalian genome.</title>
        <authorList>
            <person name="Carninci P."/>
            <person name="Kasukawa T."/>
            <person name="Katayama S."/>
            <person name="Gough J."/>
            <person name="Frith M.C."/>
            <person name="Maeda N."/>
            <person name="Oyama R."/>
            <person name="Ravasi T."/>
            <person name="Lenhard B."/>
            <person name="Wells C."/>
            <person name="Kodzius R."/>
            <person name="Shimokawa K."/>
            <person name="Bajic V.B."/>
            <person name="Brenner S.E."/>
            <person name="Batalov S."/>
            <person name="Forrest A.R."/>
            <person name="Zavolan M."/>
            <person name="Davis M.J."/>
            <person name="Wilming L.G."/>
            <person name="Aidinis V."/>
            <person name="Allen J.E."/>
            <person name="Ambesi-Impiombato A."/>
            <person name="Apweiler R."/>
            <person name="Aturaliya R.N."/>
            <person name="Bailey T.L."/>
            <person name="Bansal M."/>
            <person name="Baxter L."/>
            <person name="Beisel K.W."/>
            <person name="Bersano T."/>
            <person name="Bono H."/>
            <person name="Chalk A.M."/>
            <person name="Chiu K.P."/>
            <person name="Choudhary V."/>
            <person name="Christoffels A."/>
            <person name="Clutterbuck D.R."/>
            <person name="Crowe M.L."/>
            <person name="Dalla E."/>
            <person name="Dalrymple B.P."/>
            <person name="de Bono B."/>
            <person name="Della Gatta G."/>
            <person name="di Bernardo D."/>
            <person name="Down T."/>
            <person name="Engstrom P."/>
            <person name="Fagiolini M."/>
            <person name="Faulkner G."/>
            <person name="Fletcher C.F."/>
            <person name="Fukushima T."/>
            <person name="Furuno M."/>
            <person name="Futaki S."/>
            <person name="Gariboldi M."/>
            <person name="Georgii-Hemming P."/>
            <person name="Gingeras T.R."/>
            <person name="Gojobori T."/>
            <person name="Green R.E."/>
            <person name="Gustincich S."/>
            <person name="Harbers M."/>
            <person name="Hayashi Y."/>
            <person name="Hensch T.K."/>
            <person name="Hirokawa N."/>
            <person name="Hill D."/>
            <person name="Huminiecki L."/>
            <person name="Iacono M."/>
            <person name="Ikeo K."/>
            <person name="Iwama A."/>
            <person name="Ishikawa T."/>
            <person name="Jakt M."/>
            <person name="Kanapin A."/>
            <person name="Katoh M."/>
            <person name="Kawasawa Y."/>
            <person name="Kelso J."/>
            <person name="Kitamura H."/>
            <person name="Kitano H."/>
            <person name="Kollias G."/>
            <person name="Krishnan S.P."/>
            <person name="Kruger A."/>
            <person name="Kummerfeld S.K."/>
            <person name="Kurochkin I.V."/>
            <person name="Lareau L.F."/>
            <person name="Lazarevic D."/>
            <person name="Lipovich L."/>
            <person name="Liu J."/>
            <person name="Liuni S."/>
            <person name="McWilliam S."/>
            <person name="Madan Babu M."/>
            <person name="Madera M."/>
            <person name="Marchionni L."/>
            <person name="Matsuda H."/>
            <person name="Matsuzawa S."/>
            <person name="Miki H."/>
            <person name="Mignone F."/>
            <person name="Miyake S."/>
            <person name="Morris K."/>
            <person name="Mottagui-Tabar S."/>
            <person name="Mulder N."/>
            <person name="Nakano N."/>
            <person name="Nakauchi H."/>
            <person name="Ng P."/>
            <person name="Nilsson R."/>
            <person name="Nishiguchi S."/>
            <person name="Nishikawa S."/>
            <person name="Nori F."/>
            <person name="Ohara O."/>
            <person name="Okazaki Y."/>
            <person name="Orlando V."/>
            <person name="Pang K.C."/>
            <person name="Pavan W.J."/>
            <person name="Pavesi G."/>
            <person name="Pesole G."/>
            <person name="Petrovsky N."/>
            <person name="Piazza S."/>
            <person name="Reed J."/>
            <person name="Reid J.F."/>
            <person name="Ring B.Z."/>
            <person name="Ringwald M."/>
            <person name="Rost B."/>
            <person name="Ruan Y."/>
            <person name="Salzberg S.L."/>
            <person name="Sandelin A."/>
            <person name="Schneider C."/>
            <person name="Schoenbach C."/>
            <person name="Sekiguchi K."/>
            <person name="Semple C.A."/>
            <person name="Seno S."/>
            <person name="Sessa L."/>
            <person name="Sheng Y."/>
            <person name="Shibata Y."/>
            <person name="Shimada H."/>
            <person name="Shimada K."/>
            <person name="Silva D."/>
            <person name="Sinclair B."/>
            <person name="Sperling S."/>
            <person name="Stupka E."/>
            <person name="Sugiura K."/>
            <person name="Sultana R."/>
            <person name="Takenaka Y."/>
            <person name="Taki K."/>
            <person name="Tammoja K."/>
            <person name="Tan S.L."/>
            <person name="Tang S."/>
            <person name="Taylor M.S."/>
            <person name="Tegner J."/>
            <person name="Teichmann S.A."/>
            <person name="Ueda H.R."/>
            <person name="van Nimwegen E."/>
            <person name="Verardo R."/>
            <person name="Wei C.L."/>
            <person name="Yagi K."/>
            <person name="Yamanishi H."/>
            <person name="Zabarovsky E."/>
            <person name="Zhu S."/>
            <person name="Zimmer A."/>
            <person name="Hide W."/>
            <person name="Bult C."/>
            <person name="Grimmond S.M."/>
            <person name="Teasdale R.D."/>
            <person name="Liu E.T."/>
            <person name="Brusic V."/>
            <person name="Quackenbush J."/>
            <person name="Wahlestedt C."/>
            <person name="Mattick J.S."/>
            <person name="Hume D.A."/>
            <person name="Kai C."/>
            <person name="Sasaki D."/>
            <person name="Tomaru Y."/>
            <person name="Fukuda S."/>
            <person name="Kanamori-Katayama M."/>
            <person name="Suzuki M."/>
            <person name="Aoki J."/>
            <person name="Arakawa T."/>
            <person name="Iida J."/>
            <person name="Imamura K."/>
            <person name="Itoh M."/>
            <person name="Kato T."/>
            <person name="Kawaji H."/>
            <person name="Kawagashira N."/>
            <person name="Kawashima T."/>
            <person name="Kojima M."/>
            <person name="Kondo S."/>
            <person name="Konno H."/>
            <person name="Nakano K."/>
            <person name="Ninomiya N."/>
            <person name="Nishio T."/>
            <person name="Okada M."/>
            <person name="Plessy C."/>
            <person name="Shibata K."/>
            <person name="Shiraki T."/>
            <person name="Suzuki S."/>
            <person name="Tagami M."/>
            <person name="Waki K."/>
            <person name="Watahiki A."/>
            <person name="Okamura-Oho Y."/>
            <person name="Suzuki H."/>
            <person name="Kawai J."/>
            <person name="Hayashizaki Y."/>
        </authorList>
    </citation>
    <scope>NUCLEOTIDE SEQUENCE [LARGE SCALE MRNA]</scope>
    <source>
        <strain>C57BL/6J</strain>
        <strain>NOD</strain>
        <tissue>Head</tissue>
        <tissue>Thymus</tissue>
    </source>
</reference>
<reference key="3">
    <citation type="journal article" date="2009" name="PLoS Biol.">
        <title>Lineage-specific biology revealed by a finished genome assembly of the mouse.</title>
        <authorList>
            <person name="Church D.M."/>
            <person name="Goodstadt L."/>
            <person name="Hillier L.W."/>
            <person name="Zody M.C."/>
            <person name="Goldstein S."/>
            <person name="She X."/>
            <person name="Bult C.J."/>
            <person name="Agarwala R."/>
            <person name="Cherry J.L."/>
            <person name="DiCuccio M."/>
            <person name="Hlavina W."/>
            <person name="Kapustin Y."/>
            <person name="Meric P."/>
            <person name="Maglott D."/>
            <person name="Birtle Z."/>
            <person name="Marques A.C."/>
            <person name="Graves T."/>
            <person name="Zhou S."/>
            <person name="Teague B."/>
            <person name="Potamousis K."/>
            <person name="Churas C."/>
            <person name="Place M."/>
            <person name="Herschleb J."/>
            <person name="Runnheim R."/>
            <person name="Forrest D."/>
            <person name="Amos-Landgraf J."/>
            <person name="Schwartz D.C."/>
            <person name="Cheng Z."/>
            <person name="Lindblad-Toh K."/>
            <person name="Eichler E.E."/>
            <person name="Ponting C.P."/>
        </authorList>
    </citation>
    <scope>NUCLEOTIDE SEQUENCE [LARGE SCALE GENOMIC DNA]</scope>
    <source>
        <strain>C57BL/6J</strain>
    </source>
</reference>
<reference key="4">
    <citation type="journal article" date="2004" name="Genome Res.">
        <title>The status, quality, and expansion of the NIH full-length cDNA project: the Mammalian Gene Collection (MGC).</title>
        <authorList>
            <consortium name="The MGC Project Team"/>
        </authorList>
    </citation>
    <scope>NUCLEOTIDE SEQUENCE [LARGE SCALE MRNA]</scope>
    <source>
        <strain>FVB/N</strain>
        <tissue>Brain</tissue>
        <tissue>Mammary gland</tissue>
    </source>
</reference>
<reference key="5">
    <citation type="journal article" date="2005" name="Biochem. J.">
        <title>Ribosomal protein S2 is a substrate for mammalian PRMT3 (protein arginine methyltransferase 3).</title>
        <authorList>
            <person name="Swiercz R."/>
            <person name="Person M.D."/>
            <person name="Bedford M.T."/>
        </authorList>
    </citation>
    <scope>FUNCTION</scope>
    <scope>CATALYTIC ACTIVITY</scope>
    <scope>SUBCELLULAR LOCATION</scope>
</reference>
<reference key="6">
    <citation type="journal article" date="2007" name="J. Biol. Chem.">
        <title>Ribosomal protein rpS2 is hypomethylated in PRMT3-deficient mice.</title>
        <authorList>
            <person name="Swiercz R."/>
            <person name="Cheng D."/>
            <person name="Kim D."/>
            <person name="Bedford M.T."/>
        </authorList>
    </citation>
    <scope>FUNCTION</scope>
</reference>
<reference key="7">
    <citation type="journal article" date="2010" name="Cell">
        <title>A tissue-specific atlas of mouse protein phosphorylation and expression.</title>
        <authorList>
            <person name="Huttlin E.L."/>
            <person name="Jedrychowski M.P."/>
            <person name="Elias J.E."/>
            <person name="Goswami T."/>
            <person name="Rad R."/>
            <person name="Beausoleil S.A."/>
            <person name="Villen J."/>
            <person name="Haas W."/>
            <person name="Sowa M.E."/>
            <person name="Gygi S.P."/>
        </authorList>
    </citation>
    <scope>PHOSPHORYLATION [LARGE SCALE ANALYSIS] AT SER-22 AND SER-24</scope>
    <scope>IDENTIFICATION BY MASS SPECTROMETRY [LARGE SCALE ANALYSIS]</scope>
    <source>
        <tissue>Brain</tissue>
        <tissue>Heart</tissue>
        <tissue>Kidney</tissue>
        <tissue>Liver</tissue>
        <tissue>Lung</tissue>
        <tissue>Pancreas</tissue>
        <tissue>Spleen</tissue>
        <tissue>Testis</tissue>
    </source>
</reference>
<reference key="8">
    <citation type="journal article" date="2019" name="Cell Death Dis.">
        <title>Asymmetrical methyltransferase PRMT3 regulates human mesenchymal stem cell osteogenesis via miR-3648.</title>
        <authorList>
            <person name="Min Z."/>
            <person name="Xiaomeng L."/>
            <person name="Zheng L."/>
            <person name="Yangge D."/>
            <person name="Xuejiao L."/>
            <person name="Longwei L."/>
            <person name="Xiao Z."/>
            <person name="Yunsong L."/>
            <person name="Ping Z."/>
            <person name="Yongsheng Z."/>
        </authorList>
    </citation>
    <scope>FUNCTION</scope>
    <scope>DISRUPTION PHENOTYPE</scope>
</reference>
<reference key="9">
    <citation type="submission" date="2004-11" db="PDB data bank">
        <title>Solution structure of the C2H2 zinc finger domain of the protein arginine N-methyltransferase 3 from Mus musculus.</title>
        <authorList>
            <consortium name="RIKEN structural genomics initiative (RSGI)"/>
        </authorList>
    </citation>
    <scope>STRUCTURE BY NMR OF 38-145</scope>
</reference>